<reference key="1">
    <citation type="journal article" date="2007" name="Proc. Natl. Acad. Sci. U.S.A.">
        <title>The Orientia tsutsugamushi genome reveals massive proliferation of conjugative type IV secretion system and host-cell interaction genes.</title>
        <authorList>
            <person name="Cho N.-H."/>
            <person name="Kim H.-R."/>
            <person name="Lee J.-H."/>
            <person name="Kim S.-Y."/>
            <person name="Kim J."/>
            <person name="Cha S."/>
            <person name="Kim S.-Y."/>
            <person name="Darby A.C."/>
            <person name="Fuxelius H.-H."/>
            <person name="Yin J."/>
            <person name="Kim J.H."/>
            <person name="Kim J."/>
            <person name="Lee S.J."/>
            <person name="Koh Y.-S."/>
            <person name="Jang W.-J."/>
            <person name="Park K.-H."/>
            <person name="Andersson S.G.E."/>
            <person name="Choi M.-S."/>
            <person name="Kim I.-S."/>
        </authorList>
    </citation>
    <scope>NUCLEOTIDE SEQUENCE [LARGE SCALE GENOMIC DNA]</scope>
    <source>
        <strain>Boryong</strain>
    </source>
</reference>
<sequence length="164" mass="18625">MSSESKLIPIGIISSPYGIRGQVAIKSFTDPASNILNYELKDYRKNIIKIHSAKILSKKIICNIDQIVTRTAAEQLTRTKLYIYKHELPQLPDSEYYVANLNGIKVKNLEGEIIGKINNICNYNAGDIIEVVYNDGKKIMYPFTNEIFPQITEDFVVIVPPEFI</sequence>
<evidence type="ECO:0000255" key="1">
    <source>
        <dbReference type="HAMAP-Rule" id="MF_00014"/>
    </source>
</evidence>
<accession>A5CF62</accession>
<comment type="function">
    <text evidence="1">An accessory protein needed during the final step in the assembly of 30S ribosomal subunit, possibly for assembly of the head region. Essential for efficient processing of 16S rRNA. May be needed both before and after RbfA during the maturation of 16S rRNA. It has affinity for free ribosomal 30S subunits but not for 70S ribosomes.</text>
</comment>
<comment type="subunit">
    <text evidence="1">Binds ribosomal protein uS19.</text>
</comment>
<comment type="subcellular location">
    <subcellularLocation>
        <location evidence="1">Cytoplasm</location>
    </subcellularLocation>
</comment>
<comment type="domain">
    <text evidence="1">The PRC barrel domain binds ribosomal protein uS19.</text>
</comment>
<comment type="similarity">
    <text evidence="1">Belongs to the RimM family.</text>
</comment>
<proteinExistence type="inferred from homology"/>
<gene>
    <name evidence="1" type="primary">rimM</name>
    <name type="ordered locus">OTBS_1846</name>
</gene>
<organism>
    <name type="scientific">Orientia tsutsugamushi (strain Boryong)</name>
    <name type="common">Rickettsia tsutsugamushi</name>
    <dbReference type="NCBI Taxonomy" id="357244"/>
    <lineage>
        <taxon>Bacteria</taxon>
        <taxon>Pseudomonadati</taxon>
        <taxon>Pseudomonadota</taxon>
        <taxon>Alphaproteobacteria</taxon>
        <taxon>Rickettsiales</taxon>
        <taxon>Rickettsiaceae</taxon>
        <taxon>Rickettsieae</taxon>
        <taxon>Orientia</taxon>
    </lineage>
</organism>
<keyword id="KW-0143">Chaperone</keyword>
<keyword id="KW-0963">Cytoplasm</keyword>
<keyword id="KW-1185">Reference proteome</keyword>
<keyword id="KW-0690">Ribosome biogenesis</keyword>
<keyword id="KW-0698">rRNA processing</keyword>
<dbReference type="EMBL" id="AM494475">
    <property type="protein sequence ID" value="CAM80941.1"/>
    <property type="molecule type" value="Genomic_DNA"/>
</dbReference>
<dbReference type="RefSeq" id="WP_011945078.1">
    <property type="nucleotide sequence ID" value="NC_009488.1"/>
</dbReference>
<dbReference type="SMR" id="A5CF62"/>
<dbReference type="KEGG" id="ots:OTBS_1846"/>
<dbReference type="eggNOG" id="COG0806">
    <property type="taxonomic scope" value="Bacteria"/>
</dbReference>
<dbReference type="HOGENOM" id="CLU_077636_3_0_5"/>
<dbReference type="Proteomes" id="UP000001565">
    <property type="component" value="Chromosome"/>
</dbReference>
<dbReference type="GO" id="GO:0005737">
    <property type="term" value="C:cytoplasm"/>
    <property type="evidence" value="ECO:0007669"/>
    <property type="project" value="UniProtKB-SubCell"/>
</dbReference>
<dbReference type="GO" id="GO:0005840">
    <property type="term" value="C:ribosome"/>
    <property type="evidence" value="ECO:0007669"/>
    <property type="project" value="InterPro"/>
</dbReference>
<dbReference type="GO" id="GO:0043022">
    <property type="term" value="F:ribosome binding"/>
    <property type="evidence" value="ECO:0007669"/>
    <property type="project" value="InterPro"/>
</dbReference>
<dbReference type="GO" id="GO:0042274">
    <property type="term" value="P:ribosomal small subunit biogenesis"/>
    <property type="evidence" value="ECO:0007669"/>
    <property type="project" value="UniProtKB-UniRule"/>
</dbReference>
<dbReference type="GO" id="GO:0006364">
    <property type="term" value="P:rRNA processing"/>
    <property type="evidence" value="ECO:0007669"/>
    <property type="project" value="UniProtKB-UniRule"/>
</dbReference>
<dbReference type="Gene3D" id="2.30.30.240">
    <property type="entry name" value="PRC-barrel domain"/>
    <property type="match status" value="1"/>
</dbReference>
<dbReference type="Gene3D" id="2.40.30.60">
    <property type="entry name" value="RimM"/>
    <property type="match status" value="1"/>
</dbReference>
<dbReference type="HAMAP" id="MF_00014">
    <property type="entry name" value="Ribosome_mat_RimM"/>
    <property type="match status" value="1"/>
</dbReference>
<dbReference type="InterPro" id="IPR027275">
    <property type="entry name" value="PRC-brl_dom"/>
</dbReference>
<dbReference type="InterPro" id="IPR011033">
    <property type="entry name" value="PRC_barrel-like_sf"/>
</dbReference>
<dbReference type="InterPro" id="IPR011961">
    <property type="entry name" value="RimM"/>
</dbReference>
<dbReference type="InterPro" id="IPR002676">
    <property type="entry name" value="RimM_N"/>
</dbReference>
<dbReference type="InterPro" id="IPR036976">
    <property type="entry name" value="RimM_N_sf"/>
</dbReference>
<dbReference type="InterPro" id="IPR009000">
    <property type="entry name" value="Transl_B-barrel_sf"/>
</dbReference>
<dbReference type="NCBIfam" id="TIGR02273">
    <property type="entry name" value="16S_RimM"/>
    <property type="match status" value="1"/>
</dbReference>
<dbReference type="PANTHER" id="PTHR33692">
    <property type="entry name" value="RIBOSOME MATURATION FACTOR RIMM"/>
    <property type="match status" value="1"/>
</dbReference>
<dbReference type="PANTHER" id="PTHR33692:SF1">
    <property type="entry name" value="RIBOSOME MATURATION FACTOR RIMM"/>
    <property type="match status" value="1"/>
</dbReference>
<dbReference type="Pfam" id="PF05239">
    <property type="entry name" value="PRC"/>
    <property type="match status" value="1"/>
</dbReference>
<dbReference type="Pfam" id="PF01782">
    <property type="entry name" value="RimM"/>
    <property type="match status" value="1"/>
</dbReference>
<dbReference type="SUPFAM" id="SSF50346">
    <property type="entry name" value="PRC-barrel domain"/>
    <property type="match status" value="1"/>
</dbReference>
<dbReference type="SUPFAM" id="SSF50447">
    <property type="entry name" value="Translation proteins"/>
    <property type="match status" value="1"/>
</dbReference>
<feature type="chain" id="PRO_1000001208" description="Ribosome maturation factor RimM">
    <location>
        <begin position="1"/>
        <end position="164"/>
    </location>
</feature>
<feature type="domain" description="PRC barrel" evidence="1">
    <location>
        <begin position="93"/>
        <end position="164"/>
    </location>
</feature>
<protein>
    <recommendedName>
        <fullName evidence="1">Ribosome maturation factor RimM</fullName>
    </recommendedName>
</protein>
<name>RIMM_ORITB</name>